<gene>
    <name evidence="20" type="primary">TPCN1</name>
    <name type="synonym">KIAA1169</name>
    <name evidence="16 17" type="synonym">TPC1</name>
</gene>
<dbReference type="EMBL" id="AY083666">
    <property type="protein sequence ID" value="AAM01199.1"/>
    <property type="molecule type" value="mRNA"/>
</dbReference>
<dbReference type="EMBL" id="AB032995">
    <property type="protein sequence ID" value="BAA86483.2"/>
    <property type="status" value="ALT_INIT"/>
    <property type="molecule type" value="mRNA"/>
</dbReference>
<dbReference type="EMBL" id="AK057414">
    <property type="status" value="NOT_ANNOTATED_CDS"/>
    <property type="molecule type" value="mRNA"/>
</dbReference>
<dbReference type="EMBL" id="AK075071">
    <property type="protein sequence ID" value="BAC11385.1"/>
    <property type="molecule type" value="mRNA"/>
</dbReference>
<dbReference type="EMBL" id="AC010178">
    <property type="status" value="NOT_ANNOTATED_CDS"/>
    <property type="molecule type" value="Genomic_DNA"/>
</dbReference>
<dbReference type="EMBL" id="AC089999">
    <property type="status" value="NOT_ANNOTATED_CDS"/>
    <property type="molecule type" value="Genomic_DNA"/>
</dbReference>
<dbReference type="EMBL" id="AC127004">
    <property type="status" value="NOT_ANNOTATED_CDS"/>
    <property type="molecule type" value="Genomic_DNA"/>
</dbReference>
<dbReference type="EMBL" id="BC136795">
    <property type="protein sequence ID" value="AAI36796.1"/>
    <property type="molecule type" value="mRNA"/>
</dbReference>
<dbReference type="EMBL" id="BC136796">
    <property type="protein sequence ID" value="AAI36797.1"/>
    <property type="molecule type" value="mRNA"/>
</dbReference>
<dbReference type="EMBL" id="BC150203">
    <property type="protein sequence ID" value="AAI50204.1"/>
    <property type="molecule type" value="mRNA"/>
</dbReference>
<dbReference type="EMBL" id="BC152423">
    <property type="protein sequence ID" value="AAI52424.1"/>
    <property type="molecule type" value="mRNA"/>
</dbReference>
<dbReference type="CCDS" id="CCDS31908.1">
    <molecule id="Q9ULQ1-1"/>
</dbReference>
<dbReference type="CCDS" id="CCDS44985.1">
    <molecule id="Q9ULQ1-3"/>
</dbReference>
<dbReference type="RefSeq" id="NP_001137291.1">
    <molecule id="Q9ULQ1-3"/>
    <property type="nucleotide sequence ID" value="NM_001143819.3"/>
</dbReference>
<dbReference type="RefSeq" id="NP_001288143.1">
    <property type="nucleotide sequence ID" value="NM_001301214.1"/>
</dbReference>
<dbReference type="RefSeq" id="NP_060371.2">
    <molecule id="Q9ULQ1-1"/>
    <property type="nucleotide sequence ID" value="NM_017901.5"/>
</dbReference>
<dbReference type="RefSeq" id="XP_011536792.1">
    <property type="nucleotide sequence ID" value="XM_011538490.2"/>
</dbReference>
<dbReference type="RefSeq" id="XP_011536794.1">
    <molecule id="Q9ULQ1-1"/>
    <property type="nucleotide sequence ID" value="XM_011538492.3"/>
</dbReference>
<dbReference type="RefSeq" id="XP_054228275.1">
    <molecule id="Q9ULQ1-1"/>
    <property type="nucleotide sequence ID" value="XM_054372300.1"/>
</dbReference>
<dbReference type="SMR" id="Q9ULQ1"/>
<dbReference type="BioGRID" id="119760">
    <property type="interactions" value="35"/>
</dbReference>
<dbReference type="FunCoup" id="Q9ULQ1">
    <property type="interactions" value="819"/>
</dbReference>
<dbReference type="IntAct" id="Q9ULQ1">
    <property type="interactions" value="29"/>
</dbReference>
<dbReference type="MINT" id="Q9ULQ1"/>
<dbReference type="STRING" id="9606.ENSP00000448083"/>
<dbReference type="DrugCentral" id="Q9ULQ1"/>
<dbReference type="GuidetoPHARMACOLOGY" id="392"/>
<dbReference type="TCDB" id="1.A.1.11.25">
    <property type="family name" value="the voltage-gated ion channel (vic) superfamily"/>
</dbReference>
<dbReference type="GlyCosmos" id="Q9ULQ1">
    <property type="glycosylation" value="3 sites, No reported glycans"/>
</dbReference>
<dbReference type="GlyGen" id="Q9ULQ1">
    <property type="glycosylation" value="4 sites"/>
</dbReference>
<dbReference type="iPTMnet" id="Q9ULQ1"/>
<dbReference type="PhosphoSitePlus" id="Q9ULQ1"/>
<dbReference type="SwissPalm" id="Q9ULQ1"/>
<dbReference type="BioMuta" id="TPCN1"/>
<dbReference type="DMDM" id="125991219"/>
<dbReference type="jPOST" id="Q9ULQ1"/>
<dbReference type="MassIVE" id="Q9ULQ1"/>
<dbReference type="PaxDb" id="9606-ENSP00000448083"/>
<dbReference type="PeptideAtlas" id="Q9ULQ1"/>
<dbReference type="ProteomicsDB" id="85094">
    <molecule id="Q9ULQ1-1"/>
</dbReference>
<dbReference type="ProteomicsDB" id="85095">
    <molecule id="Q9ULQ1-2"/>
</dbReference>
<dbReference type="ProteomicsDB" id="85096">
    <molecule id="Q9ULQ1-3"/>
</dbReference>
<dbReference type="Pumba" id="Q9ULQ1"/>
<dbReference type="Antibodypedia" id="31242">
    <property type="antibodies" value="76 antibodies from 19 providers"/>
</dbReference>
<dbReference type="DNASU" id="53373"/>
<dbReference type="Ensembl" id="ENST00000335509.11">
    <molecule id="Q9ULQ1-1"/>
    <property type="protein sequence ID" value="ENSP00000335300.6"/>
    <property type="gene ID" value="ENSG00000186815.13"/>
</dbReference>
<dbReference type="Ensembl" id="ENST00000541517.5">
    <molecule id="Q9ULQ1-3"/>
    <property type="protein sequence ID" value="ENSP00000438125.1"/>
    <property type="gene ID" value="ENSG00000186815.13"/>
</dbReference>
<dbReference type="Ensembl" id="ENST00000550785.5">
    <molecule id="Q9ULQ1-3"/>
    <property type="protein sequence ID" value="ENSP00000448083.1"/>
    <property type="gene ID" value="ENSG00000186815.13"/>
</dbReference>
<dbReference type="GeneID" id="53373"/>
<dbReference type="KEGG" id="hsa:53373"/>
<dbReference type="MANE-Select" id="ENST00000335509.11">
    <property type="protein sequence ID" value="ENSP00000335300.6"/>
    <property type="RefSeq nucleotide sequence ID" value="NM_017901.6"/>
    <property type="RefSeq protein sequence ID" value="NP_060371.2"/>
</dbReference>
<dbReference type="UCSC" id="uc001tuw.4">
    <molecule id="Q9ULQ1-1"/>
    <property type="organism name" value="human"/>
</dbReference>
<dbReference type="AGR" id="HGNC:18182"/>
<dbReference type="CTD" id="53373"/>
<dbReference type="DisGeNET" id="53373"/>
<dbReference type="GeneCards" id="TPCN1"/>
<dbReference type="HGNC" id="HGNC:18182">
    <property type="gene designation" value="TPCN1"/>
</dbReference>
<dbReference type="HPA" id="ENSG00000186815">
    <property type="expression patterns" value="Low tissue specificity"/>
</dbReference>
<dbReference type="MIM" id="609666">
    <property type="type" value="gene"/>
</dbReference>
<dbReference type="neXtProt" id="NX_Q9ULQ1"/>
<dbReference type="NIAGADS" id="ENSG00000186815"/>
<dbReference type="OpenTargets" id="ENSG00000186815"/>
<dbReference type="PharmGKB" id="PA134922711"/>
<dbReference type="VEuPathDB" id="HostDB:ENSG00000186815"/>
<dbReference type="eggNOG" id="KOG2301">
    <property type="taxonomic scope" value="Eukaryota"/>
</dbReference>
<dbReference type="GeneTree" id="ENSGT00940000158958"/>
<dbReference type="InParanoid" id="Q9ULQ1"/>
<dbReference type="OrthoDB" id="10068803at2759"/>
<dbReference type="PAN-GO" id="Q9ULQ1">
    <property type="GO annotations" value="2 GO annotations based on evolutionary models"/>
</dbReference>
<dbReference type="PhylomeDB" id="Q9ULQ1"/>
<dbReference type="TreeFam" id="TF328550"/>
<dbReference type="PathwayCommons" id="Q9ULQ1"/>
<dbReference type="Reactome" id="R-HSA-2672351">
    <property type="pathway name" value="Stimuli-sensing channels"/>
</dbReference>
<dbReference type="SignaLink" id="Q9ULQ1"/>
<dbReference type="BioGRID-ORCS" id="53373">
    <property type="hits" value="14 hits in 1160 CRISPR screens"/>
</dbReference>
<dbReference type="ChiTaRS" id="TPCN1">
    <property type="organism name" value="human"/>
</dbReference>
<dbReference type="GeneWiki" id="TPCN1"/>
<dbReference type="GenomeRNAi" id="53373"/>
<dbReference type="Pharos" id="Q9ULQ1">
    <property type="development level" value="Tchem"/>
</dbReference>
<dbReference type="PRO" id="PR:Q9ULQ1"/>
<dbReference type="Proteomes" id="UP000005640">
    <property type="component" value="Chromosome 12"/>
</dbReference>
<dbReference type="RNAct" id="Q9ULQ1">
    <property type="molecule type" value="protein"/>
</dbReference>
<dbReference type="Bgee" id="ENSG00000186815">
    <property type="expression patterns" value="Expressed in right hemisphere of cerebellum and 202 other cell types or tissues"/>
</dbReference>
<dbReference type="ExpressionAtlas" id="Q9ULQ1">
    <property type="expression patterns" value="baseline and differential"/>
</dbReference>
<dbReference type="GO" id="GO:0031901">
    <property type="term" value="C:early endosome membrane"/>
    <property type="evidence" value="ECO:0000250"/>
    <property type="project" value="UniProtKB"/>
</dbReference>
<dbReference type="GO" id="GO:0036019">
    <property type="term" value="C:endolysosome"/>
    <property type="evidence" value="ECO:0000314"/>
    <property type="project" value="UniProtKB"/>
</dbReference>
<dbReference type="GO" id="GO:0005768">
    <property type="term" value="C:endosome"/>
    <property type="evidence" value="ECO:0000304"/>
    <property type="project" value="ParkinsonsUK-UCL"/>
</dbReference>
<dbReference type="GO" id="GO:0010008">
    <property type="term" value="C:endosome membrane"/>
    <property type="evidence" value="ECO:0000314"/>
    <property type="project" value="UniProtKB"/>
</dbReference>
<dbReference type="GO" id="GO:0005765">
    <property type="term" value="C:lysosomal membrane"/>
    <property type="evidence" value="ECO:0000314"/>
    <property type="project" value="UniProtKB"/>
</dbReference>
<dbReference type="GO" id="GO:0005764">
    <property type="term" value="C:lysosome"/>
    <property type="evidence" value="ECO:0000304"/>
    <property type="project" value="ParkinsonsUK-UCL"/>
</dbReference>
<dbReference type="GO" id="GO:0034702">
    <property type="term" value="C:monoatomic ion channel complex"/>
    <property type="evidence" value="ECO:0007669"/>
    <property type="project" value="UniProtKB-KW"/>
</dbReference>
<dbReference type="GO" id="GO:0055038">
    <property type="term" value="C:recycling endosome membrane"/>
    <property type="evidence" value="ECO:0000250"/>
    <property type="project" value="UniProtKB"/>
</dbReference>
<dbReference type="GO" id="GO:0042802">
    <property type="term" value="F:identical protein binding"/>
    <property type="evidence" value="ECO:0000353"/>
    <property type="project" value="IntAct"/>
</dbReference>
<dbReference type="GO" id="GO:0097682">
    <property type="term" value="F:intracellularly phosphatidylinositol-3,5-bisphosphate-gated monatomic cation channel activity"/>
    <property type="evidence" value="ECO:0000314"/>
    <property type="project" value="UniProtKB"/>
</dbReference>
<dbReference type="GO" id="GO:0015280">
    <property type="term" value="F:ligand-gated sodium channel activity"/>
    <property type="evidence" value="ECO:0000314"/>
    <property type="project" value="UniProtKB"/>
</dbReference>
<dbReference type="GO" id="GO:0072345">
    <property type="term" value="F:NAADP-sensitive calcium-release channel activity"/>
    <property type="evidence" value="ECO:0000314"/>
    <property type="project" value="UniProtKB"/>
</dbReference>
<dbReference type="GO" id="GO:0080025">
    <property type="term" value="F:phosphatidylinositol-3,5-bisphosphate binding"/>
    <property type="evidence" value="ECO:0007669"/>
    <property type="project" value="Ensembl"/>
</dbReference>
<dbReference type="GO" id="GO:0042803">
    <property type="term" value="F:protein homodimerization activity"/>
    <property type="evidence" value="ECO:0007669"/>
    <property type="project" value="Ensembl"/>
</dbReference>
<dbReference type="GO" id="GO:0019905">
    <property type="term" value="F:syntaxin binding"/>
    <property type="evidence" value="ECO:0007669"/>
    <property type="project" value="Ensembl"/>
</dbReference>
<dbReference type="GO" id="GO:0022832">
    <property type="term" value="F:voltage-gated channel activity"/>
    <property type="evidence" value="ECO:0007669"/>
    <property type="project" value="InterPro"/>
</dbReference>
<dbReference type="GO" id="GO:0005248">
    <property type="term" value="F:voltage-gated sodium channel activity"/>
    <property type="evidence" value="ECO:0000314"/>
    <property type="project" value="UniProtKB"/>
</dbReference>
<dbReference type="GO" id="GO:0075509">
    <property type="term" value="P:endocytosis involved in viral entry into host cell"/>
    <property type="evidence" value="ECO:0000315"/>
    <property type="project" value="UniProtKB"/>
</dbReference>
<dbReference type="GO" id="GO:0034220">
    <property type="term" value="P:monoatomic ion transmembrane transport"/>
    <property type="evidence" value="ECO:0000304"/>
    <property type="project" value="Reactome"/>
</dbReference>
<dbReference type="GO" id="GO:0010508">
    <property type="term" value="P:positive regulation of autophagy"/>
    <property type="evidence" value="ECO:0000314"/>
    <property type="project" value="ParkinsonsUK-UCL"/>
</dbReference>
<dbReference type="FunFam" id="1.10.287.70:FF:000062">
    <property type="entry name" value="Two pore calcium channel protein 1"/>
    <property type="match status" value="1"/>
</dbReference>
<dbReference type="FunFam" id="1.10.287.70:FF:000071">
    <property type="entry name" value="Two pore calcium channel protein 1"/>
    <property type="match status" value="1"/>
</dbReference>
<dbReference type="FunFam" id="1.20.120.350:FF:000031">
    <property type="entry name" value="Two pore calcium channel protein 1"/>
    <property type="match status" value="1"/>
</dbReference>
<dbReference type="Gene3D" id="1.10.287.70">
    <property type="match status" value="2"/>
</dbReference>
<dbReference type="Gene3D" id="1.20.120.350">
    <property type="entry name" value="Voltage-gated potassium channels. Chain C"/>
    <property type="match status" value="1"/>
</dbReference>
<dbReference type="InterPro" id="IPR005821">
    <property type="entry name" value="Ion_trans_dom"/>
</dbReference>
<dbReference type="InterPro" id="IPR028801">
    <property type="entry name" value="TPC1_animal"/>
</dbReference>
<dbReference type="InterPro" id="IPR027359">
    <property type="entry name" value="Volt_channel_dom_sf"/>
</dbReference>
<dbReference type="PANTHER" id="PTHR46474">
    <property type="entry name" value="TWO PORE CALCIUM CHANNEL PROTEIN 1"/>
    <property type="match status" value="1"/>
</dbReference>
<dbReference type="PANTHER" id="PTHR46474:SF1">
    <property type="entry name" value="TWO PORE CHANNEL PROTEIN 1"/>
    <property type="match status" value="1"/>
</dbReference>
<dbReference type="Pfam" id="PF00520">
    <property type="entry name" value="Ion_trans"/>
    <property type="match status" value="2"/>
</dbReference>
<dbReference type="SUPFAM" id="SSF81324">
    <property type="entry name" value="Voltage-gated potassium channels"/>
    <property type="match status" value="2"/>
</dbReference>
<reference key="1">
    <citation type="journal article" date="2009" name="Nature">
        <title>NAADP mobilizes calcium from acidic organelles through two-pore channels.</title>
        <authorList>
            <person name="Calcraft P.J."/>
            <person name="Ruas M."/>
            <person name="Pan Z."/>
            <person name="Cheng X."/>
            <person name="Arredouani A."/>
            <person name="Hao X."/>
            <person name="Tang J."/>
            <person name="Rietdorf K."/>
            <person name="Teboul L."/>
            <person name="Chuang K.T."/>
            <person name="Lin P."/>
            <person name="Xiao R."/>
            <person name="Wang C."/>
            <person name="Zhu Y."/>
            <person name="Lin Y."/>
            <person name="Wyatt C.N."/>
            <person name="Parrington J."/>
            <person name="Ma J."/>
            <person name="Evans A.M."/>
            <person name="Galione A."/>
            <person name="Zhu M.X."/>
        </authorList>
    </citation>
    <scope>NUCLEOTIDE SEQUENCE [MRNA] (ISOFORM 1)</scope>
</reference>
<reference key="2">
    <citation type="journal article" date="1999" name="DNA Res.">
        <title>Characterization of cDNA clones selected by the GeneMark analysis from size-fractionated cDNA libraries from human brain.</title>
        <authorList>
            <person name="Hirosawa M."/>
            <person name="Nagase T."/>
            <person name="Ishikawa K."/>
            <person name="Kikuno R."/>
            <person name="Nomura N."/>
            <person name="Ohara O."/>
        </authorList>
    </citation>
    <scope>NUCLEOTIDE SEQUENCE [LARGE SCALE MRNA] (ISOFORM 1)</scope>
    <scope>TISSUE SPECIFICITY</scope>
    <source>
        <tissue>Brain</tissue>
    </source>
</reference>
<reference key="3">
    <citation type="journal article" date="2002" name="DNA Res.">
        <title>Construction of expression-ready cDNA clones for KIAA genes: manual curation of 330 KIAA cDNA clones.</title>
        <authorList>
            <person name="Nakajima D."/>
            <person name="Okazaki N."/>
            <person name="Yamakawa H."/>
            <person name="Kikuno R."/>
            <person name="Ohara O."/>
            <person name="Nagase T."/>
        </authorList>
    </citation>
    <scope>SEQUENCE REVISION</scope>
</reference>
<reference key="4">
    <citation type="journal article" date="2004" name="Nat. Genet.">
        <title>Complete sequencing and characterization of 21,243 full-length human cDNAs.</title>
        <authorList>
            <person name="Ota T."/>
            <person name="Suzuki Y."/>
            <person name="Nishikawa T."/>
            <person name="Otsuki T."/>
            <person name="Sugiyama T."/>
            <person name="Irie R."/>
            <person name="Wakamatsu A."/>
            <person name="Hayashi K."/>
            <person name="Sato H."/>
            <person name="Nagai K."/>
            <person name="Kimura K."/>
            <person name="Makita H."/>
            <person name="Sekine M."/>
            <person name="Obayashi M."/>
            <person name="Nishi T."/>
            <person name="Shibahara T."/>
            <person name="Tanaka T."/>
            <person name="Ishii S."/>
            <person name="Yamamoto J."/>
            <person name="Saito K."/>
            <person name="Kawai Y."/>
            <person name="Isono Y."/>
            <person name="Nakamura Y."/>
            <person name="Nagahari K."/>
            <person name="Murakami K."/>
            <person name="Yasuda T."/>
            <person name="Iwayanagi T."/>
            <person name="Wagatsuma M."/>
            <person name="Shiratori A."/>
            <person name="Sudo H."/>
            <person name="Hosoiri T."/>
            <person name="Kaku Y."/>
            <person name="Kodaira H."/>
            <person name="Kondo H."/>
            <person name="Sugawara M."/>
            <person name="Takahashi M."/>
            <person name="Kanda K."/>
            <person name="Yokoi T."/>
            <person name="Furuya T."/>
            <person name="Kikkawa E."/>
            <person name="Omura Y."/>
            <person name="Abe K."/>
            <person name="Kamihara K."/>
            <person name="Katsuta N."/>
            <person name="Sato K."/>
            <person name="Tanikawa M."/>
            <person name="Yamazaki M."/>
            <person name="Ninomiya K."/>
            <person name="Ishibashi T."/>
            <person name="Yamashita H."/>
            <person name="Murakawa K."/>
            <person name="Fujimori K."/>
            <person name="Tanai H."/>
            <person name="Kimata M."/>
            <person name="Watanabe M."/>
            <person name="Hiraoka S."/>
            <person name="Chiba Y."/>
            <person name="Ishida S."/>
            <person name="Ono Y."/>
            <person name="Takiguchi S."/>
            <person name="Watanabe S."/>
            <person name="Yosida M."/>
            <person name="Hotuta T."/>
            <person name="Kusano J."/>
            <person name="Kanehori K."/>
            <person name="Takahashi-Fujii A."/>
            <person name="Hara H."/>
            <person name="Tanase T.-O."/>
            <person name="Nomura Y."/>
            <person name="Togiya S."/>
            <person name="Komai F."/>
            <person name="Hara R."/>
            <person name="Takeuchi K."/>
            <person name="Arita M."/>
            <person name="Imose N."/>
            <person name="Musashino K."/>
            <person name="Yuuki H."/>
            <person name="Oshima A."/>
            <person name="Sasaki N."/>
            <person name="Aotsuka S."/>
            <person name="Yoshikawa Y."/>
            <person name="Matsunawa H."/>
            <person name="Ichihara T."/>
            <person name="Shiohata N."/>
            <person name="Sano S."/>
            <person name="Moriya S."/>
            <person name="Momiyama H."/>
            <person name="Satoh N."/>
            <person name="Takami S."/>
            <person name="Terashima Y."/>
            <person name="Suzuki O."/>
            <person name="Nakagawa S."/>
            <person name="Senoh A."/>
            <person name="Mizoguchi H."/>
            <person name="Goto Y."/>
            <person name="Shimizu F."/>
            <person name="Wakebe H."/>
            <person name="Hishigaki H."/>
            <person name="Watanabe T."/>
            <person name="Sugiyama A."/>
            <person name="Takemoto M."/>
            <person name="Kawakami B."/>
            <person name="Yamazaki M."/>
            <person name="Watanabe K."/>
            <person name="Kumagai A."/>
            <person name="Itakura S."/>
            <person name="Fukuzumi Y."/>
            <person name="Fujimori Y."/>
            <person name="Komiyama M."/>
            <person name="Tashiro H."/>
            <person name="Tanigami A."/>
            <person name="Fujiwara T."/>
            <person name="Ono T."/>
            <person name="Yamada K."/>
            <person name="Fujii Y."/>
            <person name="Ozaki K."/>
            <person name="Hirao M."/>
            <person name="Ohmori Y."/>
            <person name="Kawabata A."/>
            <person name="Hikiji T."/>
            <person name="Kobatake N."/>
            <person name="Inagaki H."/>
            <person name="Ikema Y."/>
            <person name="Okamoto S."/>
            <person name="Okitani R."/>
            <person name="Kawakami T."/>
            <person name="Noguchi S."/>
            <person name="Itoh T."/>
            <person name="Shigeta K."/>
            <person name="Senba T."/>
            <person name="Matsumura K."/>
            <person name="Nakajima Y."/>
            <person name="Mizuno T."/>
            <person name="Morinaga M."/>
            <person name="Sasaki M."/>
            <person name="Togashi T."/>
            <person name="Oyama M."/>
            <person name="Hata H."/>
            <person name="Watanabe M."/>
            <person name="Komatsu T."/>
            <person name="Mizushima-Sugano J."/>
            <person name="Satoh T."/>
            <person name="Shirai Y."/>
            <person name="Takahashi Y."/>
            <person name="Nakagawa K."/>
            <person name="Okumura K."/>
            <person name="Nagase T."/>
            <person name="Nomura N."/>
            <person name="Kikuchi H."/>
            <person name="Masuho Y."/>
            <person name="Yamashita R."/>
            <person name="Nakai K."/>
            <person name="Yada T."/>
            <person name="Nakamura Y."/>
            <person name="Ohara O."/>
            <person name="Isogai T."/>
            <person name="Sugano S."/>
        </authorList>
    </citation>
    <scope>NUCLEOTIDE SEQUENCE [LARGE SCALE MRNA] (ISOFORMS 2 AND 3)</scope>
    <source>
        <tissue>Placenta</tissue>
    </source>
</reference>
<reference key="5">
    <citation type="journal article" date="2006" name="Nature">
        <title>The finished DNA sequence of human chromosome 12.</title>
        <authorList>
            <person name="Scherer S.E."/>
            <person name="Muzny D.M."/>
            <person name="Buhay C.J."/>
            <person name="Chen R."/>
            <person name="Cree A."/>
            <person name="Ding Y."/>
            <person name="Dugan-Rocha S."/>
            <person name="Gill R."/>
            <person name="Gunaratne P."/>
            <person name="Harris R.A."/>
            <person name="Hawes A.C."/>
            <person name="Hernandez J."/>
            <person name="Hodgson A.V."/>
            <person name="Hume J."/>
            <person name="Jackson A."/>
            <person name="Khan Z.M."/>
            <person name="Kovar-Smith C."/>
            <person name="Lewis L.R."/>
            <person name="Lozado R.J."/>
            <person name="Metzker M.L."/>
            <person name="Milosavljevic A."/>
            <person name="Miner G.R."/>
            <person name="Montgomery K.T."/>
            <person name="Morgan M.B."/>
            <person name="Nazareth L.V."/>
            <person name="Scott G."/>
            <person name="Sodergren E."/>
            <person name="Song X.-Z."/>
            <person name="Steffen D."/>
            <person name="Lovering R.C."/>
            <person name="Wheeler D.A."/>
            <person name="Worley K.C."/>
            <person name="Yuan Y."/>
            <person name="Zhang Z."/>
            <person name="Adams C.Q."/>
            <person name="Ansari-Lari M.A."/>
            <person name="Ayele M."/>
            <person name="Brown M.J."/>
            <person name="Chen G."/>
            <person name="Chen Z."/>
            <person name="Clerc-Blankenburg K.P."/>
            <person name="Davis C."/>
            <person name="Delgado O."/>
            <person name="Dinh H.H."/>
            <person name="Draper H."/>
            <person name="Gonzalez-Garay M.L."/>
            <person name="Havlak P."/>
            <person name="Jackson L.R."/>
            <person name="Jacob L.S."/>
            <person name="Kelly S.H."/>
            <person name="Li L."/>
            <person name="Li Z."/>
            <person name="Liu J."/>
            <person name="Liu W."/>
            <person name="Lu J."/>
            <person name="Maheshwari M."/>
            <person name="Nguyen B.-V."/>
            <person name="Okwuonu G.O."/>
            <person name="Pasternak S."/>
            <person name="Perez L.M."/>
            <person name="Plopper F.J.H."/>
            <person name="Santibanez J."/>
            <person name="Shen H."/>
            <person name="Tabor P.E."/>
            <person name="Verduzco D."/>
            <person name="Waldron L."/>
            <person name="Wang Q."/>
            <person name="Williams G.A."/>
            <person name="Zhang J."/>
            <person name="Zhou J."/>
            <person name="Allen C.C."/>
            <person name="Amin A.G."/>
            <person name="Anyalebechi V."/>
            <person name="Bailey M."/>
            <person name="Barbaria J.A."/>
            <person name="Bimage K.E."/>
            <person name="Bryant N.P."/>
            <person name="Burch P.E."/>
            <person name="Burkett C.E."/>
            <person name="Burrell K.L."/>
            <person name="Calderon E."/>
            <person name="Cardenas V."/>
            <person name="Carter K."/>
            <person name="Casias K."/>
            <person name="Cavazos I."/>
            <person name="Cavazos S.R."/>
            <person name="Ceasar H."/>
            <person name="Chacko J."/>
            <person name="Chan S.N."/>
            <person name="Chavez D."/>
            <person name="Christopoulos C."/>
            <person name="Chu J."/>
            <person name="Cockrell R."/>
            <person name="Cox C.D."/>
            <person name="Dang M."/>
            <person name="Dathorne S.R."/>
            <person name="David R."/>
            <person name="Davis C.M."/>
            <person name="Davy-Carroll L."/>
            <person name="Deshazo D.R."/>
            <person name="Donlin J.E."/>
            <person name="D'Souza L."/>
            <person name="Eaves K.A."/>
            <person name="Egan A."/>
            <person name="Emery-Cohen A.J."/>
            <person name="Escotto M."/>
            <person name="Flagg N."/>
            <person name="Forbes L.D."/>
            <person name="Gabisi A.M."/>
            <person name="Garza M."/>
            <person name="Hamilton C."/>
            <person name="Henderson N."/>
            <person name="Hernandez O."/>
            <person name="Hines S."/>
            <person name="Hogues M.E."/>
            <person name="Huang M."/>
            <person name="Idlebird D.G."/>
            <person name="Johnson R."/>
            <person name="Jolivet A."/>
            <person name="Jones S."/>
            <person name="Kagan R."/>
            <person name="King L.M."/>
            <person name="Leal B."/>
            <person name="Lebow H."/>
            <person name="Lee S."/>
            <person name="LeVan J.M."/>
            <person name="Lewis L.C."/>
            <person name="London P."/>
            <person name="Lorensuhewa L.M."/>
            <person name="Loulseged H."/>
            <person name="Lovett D.A."/>
            <person name="Lucier A."/>
            <person name="Lucier R.L."/>
            <person name="Ma J."/>
            <person name="Madu R.C."/>
            <person name="Mapua P."/>
            <person name="Martindale A.D."/>
            <person name="Martinez E."/>
            <person name="Massey E."/>
            <person name="Mawhiney S."/>
            <person name="Meador M.G."/>
            <person name="Mendez S."/>
            <person name="Mercado C."/>
            <person name="Mercado I.C."/>
            <person name="Merritt C.E."/>
            <person name="Miner Z.L."/>
            <person name="Minja E."/>
            <person name="Mitchell T."/>
            <person name="Mohabbat F."/>
            <person name="Mohabbat K."/>
            <person name="Montgomery B."/>
            <person name="Moore N."/>
            <person name="Morris S."/>
            <person name="Munidasa M."/>
            <person name="Ngo R.N."/>
            <person name="Nguyen N.B."/>
            <person name="Nickerson E."/>
            <person name="Nwaokelemeh O.O."/>
            <person name="Nwokenkwo S."/>
            <person name="Obregon M."/>
            <person name="Oguh M."/>
            <person name="Oragunye N."/>
            <person name="Oviedo R.J."/>
            <person name="Parish B.J."/>
            <person name="Parker D.N."/>
            <person name="Parrish J."/>
            <person name="Parks K.L."/>
            <person name="Paul H.A."/>
            <person name="Payton B.A."/>
            <person name="Perez A."/>
            <person name="Perrin W."/>
            <person name="Pickens A."/>
            <person name="Primus E.L."/>
            <person name="Pu L.-L."/>
            <person name="Puazo M."/>
            <person name="Quiles M.M."/>
            <person name="Quiroz J.B."/>
            <person name="Rabata D."/>
            <person name="Reeves K."/>
            <person name="Ruiz S.J."/>
            <person name="Shao H."/>
            <person name="Sisson I."/>
            <person name="Sonaike T."/>
            <person name="Sorelle R.P."/>
            <person name="Sutton A.E."/>
            <person name="Svatek A.F."/>
            <person name="Svetz L.A."/>
            <person name="Tamerisa K.S."/>
            <person name="Taylor T.R."/>
            <person name="Teague B."/>
            <person name="Thomas N."/>
            <person name="Thorn R.D."/>
            <person name="Trejos Z.Y."/>
            <person name="Trevino B.K."/>
            <person name="Ukegbu O.N."/>
            <person name="Urban J.B."/>
            <person name="Vasquez L.I."/>
            <person name="Vera V.A."/>
            <person name="Villasana D.M."/>
            <person name="Wang L."/>
            <person name="Ward-Moore S."/>
            <person name="Warren J.T."/>
            <person name="Wei X."/>
            <person name="White F."/>
            <person name="Williamson A.L."/>
            <person name="Wleczyk R."/>
            <person name="Wooden H.S."/>
            <person name="Wooden S.H."/>
            <person name="Yen J."/>
            <person name="Yoon L."/>
            <person name="Yoon V."/>
            <person name="Zorrilla S.E."/>
            <person name="Nelson D."/>
            <person name="Kucherlapati R."/>
            <person name="Weinstock G."/>
            <person name="Gibbs R.A."/>
        </authorList>
    </citation>
    <scope>NUCLEOTIDE SEQUENCE [LARGE SCALE GENOMIC DNA]</scope>
</reference>
<reference key="6">
    <citation type="journal article" date="2004" name="Genome Res.">
        <title>The status, quality, and expansion of the NIH full-length cDNA project: the Mammalian Gene Collection (MGC).</title>
        <authorList>
            <consortium name="The MGC Project Team"/>
        </authorList>
    </citation>
    <scope>NUCLEOTIDE SEQUENCE [LARGE SCALE MRNA] (ISOFORM 1)</scope>
    <source>
        <tissue>Brain</tissue>
    </source>
</reference>
<reference key="7">
    <citation type="journal article" date="2009" name="J. Cell Biol.">
        <title>Essential requirement for two-pore channel 1 in NAADP-mediated calcium signaling.</title>
        <authorList>
            <person name="Brailoiu E."/>
            <person name="Churamani D."/>
            <person name="Cai X."/>
            <person name="Schrlau M.G."/>
            <person name="Brailoiu G.C."/>
            <person name="Gao X."/>
            <person name="Hooper R."/>
            <person name="Boulware M.J."/>
            <person name="Dun N.J."/>
            <person name="Marchant J.S."/>
            <person name="Patel S."/>
        </authorList>
    </citation>
    <scope>FUNCTION</scope>
    <scope>MUTAGENESIS OF LEU-273</scope>
    <scope>SUBCELLULAR LOCATION</scope>
</reference>
<reference key="8">
    <citation type="journal article" date="2010" name="J. Biol. Chem.">
        <title>An NAADP-gated two-pore channel targeted to the plasma membrane uncouples triggering from amplifying Ca2+ signals.</title>
        <authorList>
            <person name="Brailoiu E."/>
            <person name="Rahman T."/>
            <person name="Churamani D."/>
            <person name="Prole D.L."/>
            <person name="Brailoiu G.C."/>
            <person name="Hooper R."/>
            <person name="Taylor C.W."/>
            <person name="Patel S."/>
        </authorList>
    </citation>
    <scope>SUBCELLULAR LOCATION</scope>
    <scope>MUTAGENESIS OF 740-LEU-LEU-741</scope>
</reference>
<reference key="9">
    <citation type="journal article" date="2012" name="Cell">
        <title>TPC proteins are phosphoinositide- activated sodium-selective ion channels in endosomes and lysosomes.</title>
        <authorList>
            <person name="Wang X."/>
            <person name="Zhang X."/>
            <person name="Dong X.P."/>
            <person name="Samie M."/>
            <person name="Li X."/>
            <person name="Cheng X."/>
            <person name="Goschka A."/>
            <person name="Shen D."/>
            <person name="Zhou Y."/>
            <person name="Harlow J."/>
            <person name="Zhu M.X."/>
            <person name="Clapham D.E."/>
            <person name="Ren D."/>
            <person name="Xu H."/>
        </authorList>
    </citation>
    <scope>FUNCTION</scope>
    <scope>SUBCELLULAR LOCATION</scope>
</reference>
<reference key="10">
    <citation type="journal article" date="2013" name="Cell">
        <title>mTOR regulates lysosomal ATP-sensitive two-pore Na(+) channels to adapt to metabolic state.</title>
        <authorList>
            <person name="Cang C."/>
            <person name="Zhou Y."/>
            <person name="Navarro B."/>
            <person name="Seo Y.J."/>
            <person name="Aranda K."/>
            <person name="Shi L."/>
            <person name="Battaglia-Hsu S."/>
            <person name="Nissim I."/>
            <person name="Clapham D.E."/>
            <person name="Ren D."/>
        </authorList>
    </citation>
    <scope>FUNCTION</scope>
    <scope>CATALYTIC ACTIVITY</scope>
    <scope>INTERACTION WITH MTOR</scope>
</reference>
<reference key="11">
    <citation type="journal article" date="2014" name="Nat. Chem. Biol.">
        <title>The voltage-gated sodium channel TPC1 confers endolysosomal excitability.</title>
        <authorList>
            <person name="Cang C."/>
            <person name="Bekele B."/>
            <person name="Ren D."/>
        </authorList>
    </citation>
    <scope>FUNCTION</scope>
    <scope>CATALYTIC ACTIVITY</scope>
    <scope>MUTAGENESIS OF 219-ARG--ARG-223 AND ARG-539</scope>
    <scope>DOMAIN</scope>
</reference>
<reference key="12">
    <citation type="journal article" date="2014" name="J. Proteomics">
        <title>An enzyme assisted RP-RPLC approach for in-depth analysis of human liver phosphoproteome.</title>
        <authorList>
            <person name="Bian Y."/>
            <person name="Song C."/>
            <person name="Cheng K."/>
            <person name="Dong M."/>
            <person name="Wang F."/>
            <person name="Huang J."/>
            <person name="Sun D."/>
            <person name="Wang L."/>
            <person name="Ye M."/>
            <person name="Zou H."/>
        </authorList>
    </citation>
    <scope>IDENTIFICATION BY MASS SPECTROMETRY [LARGE SCALE ANALYSIS]</scope>
    <source>
        <tissue>Liver</tissue>
    </source>
</reference>
<reference key="13">
    <citation type="journal article" date="2015" name="Science">
        <title>Ebola virus. Two-pore channels control Ebola virus host cell entry and are drug targets for disease treatment.</title>
        <authorList>
            <person name="Sakurai Y."/>
            <person name="Kolokoltsov A.A."/>
            <person name="Chen C.C."/>
            <person name="Tidwell M.W."/>
            <person name="Bauta W.E."/>
            <person name="Klugbauer N."/>
            <person name="Grimm C."/>
            <person name="Wahl-Schott C."/>
            <person name="Biel M."/>
            <person name="Davey R.A."/>
        </authorList>
    </citation>
    <scope>FUNCTION (MICROBIAL INFECTION)</scope>
    <scope>ACTIVITY REGULATION</scope>
    <scope>SUBCELLULAR LOCATION</scope>
</reference>
<reference key="14">
    <citation type="journal article" date="2020" name="Trends Pharmacol. Sci.">
        <title>Targeting Two-Pore Channels: Current Progress and Future Challenges.</title>
        <authorList>
            <person name="Jin X."/>
            <person name="Zhang Y."/>
            <person name="Alharbi A."/>
            <person name="Hanbashi A."/>
            <person name="Alhoshani A."/>
            <person name="Parrington J."/>
        </authorList>
    </citation>
    <scope>REVIEW OF FUNCTION</scope>
</reference>
<reference key="15">
    <citation type="journal article" date="2021" name="Sci. Signal.">
        <title>Essential requirement for JPT2 in NAADP-evoked Ca2+ signaling.</title>
        <authorList>
            <person name="Gunaratne G.S."/>
            <person name="Brailoiu E."/>
            <person name="He S."/>
            <person name="Unterwald E.M."/>
            <person name="Patel S."/>
            <person name="Slama J.T."/>
            <person name="Walseth T.F."/>
            <person name="Marchant J.S."/>
        </authorList>
    </citation>
    <scope>INTERACTION WITH JPT2</scope>
</reference>
<reference key="16">
    <citation type="journal article" date="2021" name="Nat. Commun.">
        <title>Lsm12 is an NAADP receptor and a two-pore channel regulatory protein required for calcium mobilization from acidic organelles.</title>
        <authorList>
            <person name="Zhang J."/>
            <person name="Guan X."/>
            <person name="Shah K."/>
            <person name="Yan J."/>
        </authorList>
    </citation>
    <scope>SUBUNIT</scope>
</reference>
<accession>Q9ULQ1</accession>
<accession>A7E258</accession>
<accession>Q86XS9</accession>
<accession>Q8NC20</accession>
<protein>
    <recommendedName>
        <fullName evidence="18">Two pore channel protein 1</fullName>
    </recommendedName>
    <alternativeName>
        <fullName>Two pore calcium channel protein 1</fullName>
    </alternativeName>
    <alternativeName>
        <fullName>Voltage-dependent calcium channel protein TPC1</fullName>
    </alternativeName>
</protein>
<comment type="function">
    <text evidence="7 9 10 11 19">Intracellular channel initially characterized as a non-selective Ca(2+)-permeable channel activated by NAADP (nicotinic acid adenine dinucleotide phosphate), it is also a voltage-gated highly-selective Na(+) channel activated directly by PI(3,5)P2 (phosphatidylinositol 3,5-bisphosphate) that senses pH changes and confers electrical excitability to organelles (PubMed:19620632, PubMed:23063126, PubMed:23394946, PubMed:24776928). Localizes to the early and recycling endosomes membranes where it plays a role in the uptake and processing of proteins and regulates organellar membrane excitability, membrane trafficking and pH homeostasis (Probable) (PubMed:23394946). Ion selectivity is not fixed but rather agonist-dependent and under defined ionic conditions, can be readily activated by both NAADP and PI(3,5)P2 (Probable). Required for mTOR-dependent nutrient sensing (Probable) (PubMed:23394946).</text>
</comment>
<comment type="function">
    <text evidence="12">(Microbial infection) During Ebola virus (EBOV) infection, controls the movement of endosomes containing virus particles and is required by EBOV to escape from the endosomal network into the cell cytoplasm.</text>
</comment>
<comment type="catalytic activity">
    <reaction evidence="10 11">
        <text>Na(+)(in) = Na(+)(out)</text>
        <dbReference type="Rhea" id="RHEA:34963"/>
        <dbReference type="ChEBI" id="CHEBI:29101"/>
    </reaction>
    <physiologicalReaction direction="right-to-left" evidence="10 11">
        <dbReference type="Rhea" id="RHEA:34965"/>
    </physiologicalReaction>
</comment>
<comment type="catalytic activity">
    <reaction evidence="6">
        <text>Ca(2+)(in) = Ca(2+)(out)</text>
        <dbReference type="Rhea" id="RHEA:29671"/>
        <dbReference type="ChEBI" id="CHEBI:29108"/>
    </reaction>
    <physiologicalReaction direction="right-to-left" evidence="6">
        <dbReference type="Rhea" id="RHEA:29673"/>
    </physiologicalReaction>
</comment>
<comment type="activity regulation">
    <text evidence="1 10 12">Na(+) current is inhibited by ATP in a MTORC-dependent manner. ATP sensitivity is independent of PI(3,5)P2 (PubMed:23394946). Probably regulated by Mg(2+) ions, cytosolic Mg(2+) selectively inhibits outward current while lysosomal Mg(2+) modestly inhibits both the outward and inward currents. In the absence of Mg(2+), NAADP readily activates TPCN2, with properties similar to PI(3,5)P2 (By similarity). Both current elicited by PI(3,5)P2 as well as NAADP are inhibited by tetrandrine.</text>
</comment>
<comment type="subunit">
    <text evidence="2 10 13 14 18">Dimer. Interacts with MTOR; the interaction is required for TPCN1 ATP sensitivity (PubMed:23394946). Interacts with STX7, STX8 and STX12 (By similarity). Interacts with JPT2 (PubMed:33758061). Found in a complex with LSM12, TPCN1 and TPCN2 (PubMed:34362892).</text>
</comment>
<comment type="interaction">
    <interactant intactId="EBI-5239895">
        <id>Q9ULQ1</id>
    </interactant>
    <interactant intactId="EBI-357001">
        <id>O00165</id>
        <label>HAX1</label>
    </interactant>
    <organismsDiffer>false</organismsDiffer>
    <experiments>2</experiments>
</comment>
<comment type="interaction">
    <interactant intactId="EBI-5239895">
        <id>Q9ULQ1</id>
    </interactant>
    <interactant intactId="EBI-5239895">
        <id>Q9ULQ1</id>
        <label>TPCN1</label>
    </interactant>
    <organismsDiffer>false</organismsDiffer>
    <experiments>3</experiments>
</comment>
<comment type="interaction">
    <interactant intactId="EBI-5239895">
        <id>Q9ULQ1</id>
    </interactant>
    <interactant intactId="EBI-5239949">
        <id>Q8NHX9</id>
        <label>TPCN2</label>
    </interactant>
    <organismsDiffer>false</organismsDiffer>
    <experiments>9</experiments>
</comment>
<comment type="subcellular location">
    <subcellularLocation>
        <location evidence="7 9 12">Lysosome membrane</location>
        <topology evidence="7">Multi-pass membrane protein</topology>
    </subcellularLocation>
    <subcellularLocation>
        <location evidence="7 8 9 12">Endosome membrane</location>
        <topology evidence="7">Multi-pass membrane protein</topology>
    </subcellularLocation>
    <subcellularLocation>
        <location evidence="2">Early endosome membrane</location>
        <topology evidence="2">Multi-pass membrane protein</topology>
    </subcellularLocation>
    <subcellularLocation>
        <location evidence="2">Recycling endosome membrane</location>
        <topology evidence="2">Multi-pass membrane protein</topology>
    </subcellularLocation>
</comment>
<comment type="alternative products">
    <event type="alternative splicing"/>
    <isoform>
        <id>Q9ULQ1-1</id>
        <name>1</name>
        <sequence type="displayed"/>
    </isoform>
    <isoform>
        <id>Q9ULQ1-2</id>
        <name>2</name>
        <sequence type="described" ref="VSP_023003 VSP_023004 VSP_023005"/>
    </isoform>
    <isoform>
        <id>Q9ULQ1-3</id>
        <name>3</name>
        <sequence type="described" ref="VSP_041346"/>
    </isoform>
</comment>
<comment type="tissue specificity">
    <text evidence="5">Highest expression found in the heart and kidney, and lowest expression found in the spleen.</text>
</comment>
<comment type="domain">
    <text evidence="11">Each of the two internal repeats contains five hydrophobic transmembrane segments (S1, S2, S3, S5, S6) and one positively charged transmembrane segment (S4). S4 segments represent the voltage-sensor and are characterized by a series of positively charged amino acids at every third position.</text>
</comment>
<comment type="PTM">
    <text evidence="2">N-glycosylated.</text>
</comment>
<comment type="similarity">
    <text evidence="18">Belongs to the calcium channel alpha-1 subunit (TC 1.A.1.11) family. Two pore calcium channel subfamily.</text>
</comment>
<comment type="sequence caution" evidence="18">
    <conflict type="frameshift">
        <sequence resource="EMBL" id="AK057414"/>
    </conflict>
</comment>
<comment type="sequence caution" evidence="18">
    <conflict type="erroneous initiation">
        <sequence resource="EMBL-CDS" id="BAA86483"/>
    </conflict>
    <text>Extended N-terminus.</text>
</comment>
<organism>
    <name type="scientific">Homo sapiens</name>
    <name type="common">Human</name>
    <dbReference type="NCBI Taxonomy" id="9606"/>
    <lineage>
        <taxon>Eukaryota</taxon>
        <taxon>Metazoa</taxon>
        <taxon>Chordata</taxon>
        <taxon>Craniata</taxon>
        <taxon>Vertebrata</taxon>
        <taxon>Euteleostomi</taxon>
        <taxon>Mammalia</taxon>
        <taxon>Eutheria</taxon>
        <taxon>Euarchontoglires</taxon>
        <taxon>Primates</taxon>
        <taxon>Haplorrhini</taxon>
        <taxon>Catarrhini</taxon>
        <taxon>Hominidae</taxon>
        <taxon>Homo</taxon>
    </lineage>
</organism>
<feature type="chain" id="PRO_0000276853" description="Two pore channel protein 1">
    <location>
        <begin position="1"/>
        <end position="816"/>
    </location>
</feature>
<feature type="topological domain" description="Cytoplasmic" evidence="3">
    <location>
        <begin position="1"/>
        <end position="112"/>
    </location>
</feature>
<feature type="transmembrane region" description="Helical; Name=S1 of repeat I" evidence="3">
    <location>
        <begin position="113"/>
        <end position="133"/>
    </location>
</feature>
<feature type="topological domain" description="Extracellular" evidence="3">
    <location>
        <position position="134"/>
    </location>
</feature>
<feature type="transmembrane region" description="Helical; Name=S2 of repeat I" evidence="3">
    <location>
        <begin position="135"/>
        <end position="155"/>
    </location>
</feature>
<feature type="topological domain" description="Cytoplasmic" evidence="3">
    <location>
        <begin position="156"/>
        <end position="177"/>
    </location>
</feature>
<feature type="transmembrane region" description="Helical; Name=S3 of repeat I" evidence="3">
    <location>
        <begin position="178"/>
        <end position="198"/>
    </location>
</feature>
<feature type="topological domain" description="Extracellular" evidence="3">
    <location>
        <begin position="199"/>
        <end position="200"/>
    </location>
</feature>
<feature type="transmembrane region" description="Helical; Name=S4 of repeat I" evidence="3">
    <location>
        <begin position="201"/>
        <end position="220"/>
    </location>
</feature>
<feature type="topological domain" description="Cytoplasmic" evidence="3">
    <location>
        <begin position="221"/>
        <end position="234"/>
    </location>
</feature>
<feature type="transmembrane region" description="Helical; Name=S5 of repeat I" evidence="3">
    <location>
        <begin position="235"/>
        <end position="255"/>
    </location>
</feature>
<feature type="topological domain" description="Extracellular" evidence="3">
    <location>
        <begin position="256"/>
        <end position="262"/>
    </location>
</feature>
<feature type="intramembrane region" description="Helical; Pore-forming" evidence="3">
    <location>
        <begin position="263"/>
        <end position="286"/>
    </location>
</feature>
<feature type="topological domain" description="Extracellular" evidence="3">
    <location>
        <begin position="287"/>
        <end position="294"/>
    </location>
</feature>
<feature type="transmembrane region" description="Helical; Name=S6 of repeat I" evidence="3">
    <location>
        <begin position="295"/>
        <end position="315"/>
    </location>
</feature>
<feature type="topological domain" description="Cytoplasmic" evidence="3">
    <location>
        <begin position="316"/>
        <end position="444"/>
    </location>
</feature>
<feature type="transmembrane region" description="Helical; Name=S1 of repeat II" evidence="3">
    <location>
        <begin position="445"/>
        <end position="465"/>
    </location>
</feature>
<feature type="topological domain" description="Extracellular" evidence="3">
    <location>
        <begin position="466"/>
        <end position="479"/>
    </location>
</feature>
<feature type="transmembrane region" description="Helical; Name=S2 of repeat II" evidence="3">
    <location>
        <begin position="480"/>
        <end position="500"/>
    </location>
</feature>
<feature type="topological domain" description="Cytoplasmic" evidence="3">
    <location>
        <begin position="501"/>
        <end position="503"/>
    </location>
</feature>
<feature type="transmembrane region" description="Helical; Name=S3 of repeat II" evidence="3">
    <location>
        <begin position="504"/>
        <end position="526"/>
    </location>
</feature>
<feature type="topological domain" description="Extracellular" evidence="3">
    <location>
        <begin position="527"/>
        <end position="534"/>
    </location>
</feature>
<feature type="transmembrane region" description="Helical; Name=S4 of repeat II" evidence="3">
    <location>
        <begin position="535"/>
        <end position="549"/>
    </location>
</feature>
<feature type="topological domain" description="Cytoplasmic" evidence="3">
    <location>
        <begin position="550"/>
        <end position="573"/>
    </location>
</feature>
<feature type="transmembrane region" description="Helical; Name=S5 of repeat II" evidence="3">
    <location>
        <begin position="574"/>
        <end position="594"/>
    </location>
</feature>
<feature type="topological domain" description="Extracellular" evidence="3">
    <location>
        <begin position="595"/>
        <end position="629"/>
    </location>
</feature>
<feature type="intramembrane region" description="Helical; Pore-forming" evidence="3">
    <location>
        <begin position="630"/>
        <end position="653"/>
    </location>
</feature>
<feature type="topological domain" description="Extracellular" evidence="3">
    <location>
        <begin position="654"/>
        <end position="670"/>
    </location>
</feature>
<feature type="transmembrane region" description="Helical; Name=S6 of repeat II" evidence="3">
    <location>
        <begin position="671"/>
        <end position="691"/>
    </location>
</feature>
<feature type="topological domain" description="Cytoplasmic" evidence="3">
    <location>
        <begin position="692"/>
        <end position="816"/>
    </location>
</feature>
<feature type="region of interest" description="Disordered" evidence="4">
    <location>
        <begin position="17"/>
        <end position="64"/>
    </location>
</feature>
<feature type="region of interest" description="Disordered" evidence="4">
    <location>
        <begin position="782"/>
        <end position="816"/>
    </location>
</feature>
<feature type="coiled-coil region" evidence="3">
    <location>
        <begin position="769"/>
        <end position="796"/>
    </location>
</feature>
<feature type="compositionally biased region" description="Low complexity" evidence="4">
    <location>
        <begin position="50"/>
        <end position="63"/>
    </location>
</feature>
<feature type="compositionally biased region" description="Low complexity" evidence="4">
    <location>
        <begin position="791"/>
        <end position="816"/>
    </location>
</feature>
<feature type="glycosylation site" description="N-linked (GlcNAc...) asparagine" evidence="3">
    <location>
        <position position="599"/>
    </location>
</feature>
<feature type="glycosylation site" description="N-linked (GlcNAc...) asparagine" evidence="3">
    <location>
        <position position="611"/>
    </location>
</feature>
<feature type="glycosylation site" description="N-linked (GlcNAc...) asparagine" evidence="3">
    <location>
        <position position="616"/>
    </location>
</feature>
<feature type="splice variant" id="VSP_023003" description="In isoform 2." evidence="15">
    <location>
        <begin position="1"/>
        <end position="366"/>
    </location>
</feature>
<feature type="splice variant" id="VSP_041346" description="In isoform 3." evidence="15">
    <original>M</original>
    <variation>MESCYIAQAGLELLGSSSSPTLTSQSAEITEDASNGGVSEQHPWPSGFERELKPETISSPGYHILRATGEENM</variation>
    <location>
        <position position="1"/>
    </location>
</feature>
<feature type="splice variant" id="VSP_023004" description="In isoform 2." evidence="15">
    <original>SLGLTLLIFYYSFAIVGMEFFCGIVFPNCCNTSTVADAYRWRNHTVGNRT</original>
    <variation>RYCQPPPWPAGPGAVWQCPVGAGAEWQSGERSSTKDCNRGPDGAPRSLES</variation>
    <location>
        <begin position="569"/>
        <end position="618"/>
    </location>
</feature>
<feature type="splice variant" id="VSP_023005" description="In isoform 2." evidence="15">
    <location>
        <begin position="619"/>
        <end position="816"/>
    </location>
</feature>
<feature type="mutagenesis site" description="Loss of voltage sensitivity." evidence="11">
    <original>RRNLR</original>
    <variation>QQNLQ</variation>
    <location>
        <begin position="219"/>
        <end position="223"/>
    </location>
</feature>
<feature type="mutagenesis site" description="Loss of NAADP-mediated cytoplasmic calcium release." evidence="7">
    <original>L</original>
    <variation>P</variation>
    <location>
        <position position="273"/>
    </location>
</feature>
<feature type="mutagenesis site" description="Loss of voltage sensitivity." evidence="11">
    <original>R</original>
    <variation>I</variation>
    <location>
        <position position="539"/>
    </location>
</feature>
<feature type="mutagenesis site" description="No effect on subcellular location." evidence="8">
    <original>LL</original>
    <variation>AA</variation>
    <location>
        <begin position="740"/>
        <end position="741"/>
    </location>
</feature>
<feature type="sequence conflict" description="In Ref. 4; AK057414." evidence="18" ref="4">
    <original>E</original>
    <variation>G</variation>
    <location>
        <position position="621"/>
    </location>
</feature>
<keyword id="KW-0025">Alternative splicing</keyword>
<keyword id="KW-0106">Calcium</keyword>
<keyword id="KW-0107">Calcium channel</keyword>
<keyword id="KW-0109">Calcium transport</keyword>
<keyword id="KW-0175">Coiled coil</keyword>
<keyword id="KW-0967">Endosome</keyword>
<keyword id="KW-0325">Glycoprotein</keyword>
<keyword id="KW-0407">Ion channel</keyword>
<keyword id="KW-0406">Ion transport</keyword>
<keyword id="KW-0458">Lysosome</keyword>
<keyword id="KW-0472">Membrane</keyword>
<keyword id="KW-1267">Proteomics identification</keyword>
<keyword id="KW-1185">Reference proteome</keyword>
<keyword id="KW-0677">Repeat</keyword>
<keyword id="KW-0812">Transmembrane</keyword>
<keyword id="KW-1133">Transmembrane helix</keyword>
<keyword id="KW-0813">Transport</keyword>
<keyword id="KW-0851">Voltage-gated channel</keyword>
<sequence length="816" mass="94147">MAVSLDDDVPLILTLDEGGSAPLAPSNGLGQEELPSKNGGSYAIHDSQAPSLSSGGESSPSSPAHNWEMNYQEAAIYLQEGENNDKFFTHPKDAKALAAYLFAHNHLFYLMELATALLLLLLSLCEAPAVPALRLGIYVHATLELFALMVVVFELCMKLRWLGLHTFIRHKRTMVKTSVLVVQFVEAIVVLVRQMSHVRVTRALRCIFLVDCRYCGGVRRNLRQIFQSLPPFMDILLLLLFFMIIFAILGFYLFSPNPSDPYFSTLENSIVSLFVLLTTANFPDVMMPSYSRNPWSCVFFIVYLSIELYFIMNLLLAVVFDTFNDIEKRKFKSLLLHKRTAIQHAYRLLISQRRPAGISYRQFEGLMRFYKPRMSARERYLTFKALNQNNTPLLSLKDFYDIYEVAALKWKAKKNREHWFDELPRTALLIFKGINILVKSKAFQYFMYLVVAVNGVWILVETFMLKGGNFFSKHVPWSYLVFLTIYGVELFLKVAGLGPVEYLSSGWNLFDFSVTVFAFLGLLALALNMEPFYFIVVLRPLQLLRLFKLKERYRNVLDTMFELLPRMASLGLTLLIFYYSFAIVGMEFFCGIVFPNCCNTSTVADAYRWRNHTVGNRTVVEEGYYYLNNFDNILNSFVTLFELTVVNNWYIIMEGVTSQTSHWSRLYFMTFYIVTMVVMTIIVAFILEAFVFRMNYSRKNQDSEVDGGITLEKEISKEELVAVLELYREARGASSDVTRLLETLSQMERYQQHSMVFLGRRSRTKSDLSLKMYQEEIQEWYEEHAREQEQQRQLSSSAAPAAQQPPGSRQRSQTVT</sequence>
<evidence type="ECO:0000250" key="1">
    <source>
        <dbReference type="UniProtKB" id="Q8NHX9"/>
    </source>
</evidence>
<evidence type="ECO:0000250" key="2">
    <source>
        <dbReference type="UniProtKB" id="Q9EQJ0"/>
    </source>
</evidence>
<evidence type="ECO:0000255" key="3"/>
<evidence type="ECO:0000256" key="4">
    <source>
        <dbReference type="SAM" id="MobiDB-lite"/>
    </source>
</evidence>
<evidence type="ECO:0000269" key="5">
    <source>
    </source>
</evidence>
<evidence type="ECO:0000269" key="6">
    <source>
    </source>
</evidence>
<evidence type="ECO:0000269" key="7">
    <source>
    </source>
</evidence>
<evidence type="ECO:0000269" key="8">
    <source>
    </source>
</evidence>
<evidence type="ECO:0000269" key="9">
    <source>
    </source>
</evidence>
<evidence type="ECO:0000269" key="10">
    <source>
    </source>
</evidence>
<evidence type="ECO:0000269" key="11">
    <source>
    </source>
</evidence>
<evidence type="ECO:0000269" key="12">
    <source>
    </source>
</evidence>
<evidence type="ECO:0000269" key="13">
    <source>
    </source>
</evidence>
<evidence type="ECO:0000269" key="14">
    <source>
    </source>
</evidence>
<evidence type="ECO:0000303" key="15">
    <source>
    </source>
</evidence>
<evidence type="ECO:0000303" key="16">
    <source>
    </source>
</evidence>
<evidence type="ECO:0000303" key="17">
    <source>
    </source>
</evidence>
<evidence type="ECO:0000305" key="18"/>
<evidence type="ECO:0000305" key="19">
    <source>
    </source>
</evidence>
<evidence type="ECO:0000312" key="20">
    <source>
        <dbReference type="HGNC" id="HGNC:18182"/>
    </source>
</evidence>
<proteinExistence type="evidence at protein level"/>
<name>TPC1_HUMAN</name>